<dbReference type="EC" id="3.4.24.-"/>
<dbReference type="EMBL" id="AACD01000100">
    <property type="protein sequence ID" value="EAA58325.1"/>
    <property type="status" value="ALT_SEQ"/>
    <property type="molecule type" value="Genomic_DNA"/>
</dbReference>
<dbReference type="EMBL" id="BN001301">
    <property type="protein sequence ID" value="CBF70789.1"/>
    <property type="molecule type" value="Genomic_DNA"/>
</dbReference>
<dbReference type="RefSeq" id="XP_663420.1">
    <property type="nucleotide sequence ID" value="XM_658328.1"/>
</dbReference>
<dbReference type="FunCoup" id="Q5B0W4">
    <property type="interactions" value="475"/>
</dbReference>
<dbReference type="STRING" id="227321.Q5B0W4"/>
<dbReference type="MEROPS" id="M76.002"/>
<dbReference type="EnsemblFungi" id="CBF70789">
    <property type="protein sequence ID" value="CBF70789"/>
    <property type="gene ID" value="ANIA_05816"/>
</dbReference>
<dbReference type="VEuPathDB" id="FungiDB:AN5816"/>
<dbReference type="eggNOG" id="KOG3314">
    <property type="taxonomic scope" value="Eukaryota"/>
</dbReference>
<dbReference type="HOGENOM" id="CLU_079125_2_1_1"/>
<dbReference type="InParanoid" id="Q5B0W4"/>
<dbReference type="OMA" id="EAHQNCV"/>
<dbReference type="OrthoDB" id="285308at2759"/>
<dbReference type="Proteomes" id="UP000000560">
    <property type="component" value="Chromosome I"/>
</dbReference>
<dbReference type="GO" id="GO:0005743">
    <property type="term" value="C:mitochondrial inner membrane"/>
    <property type="evidence" value="ECO:0007669"/>
    <property type="project" value="UniProtKB-SubCell"/>
</dbReference>
<dbReference type="GO" id="GO:0046872">
    <property type="term" value="F:metal ion binding"/>
    <property type="evidence" value="ECO:0007669"/>
    <property type="project" value="UniProtKB-KW"/>
</dbReference>
<dbReference type="GO" id="GO:0004222">
    <property type="term" value="F:metalloendopeptidase activity"/>
    <property type="evidence" value="ECO:0007669"/>
    <property type="project" value="InterPro"/>
</dbReference>
<dbReference type="GO" id="GO:0034982">
    <property type="term" value="P:mitochondrial protein processing"/>
    <property type="evidence" value="ECO:0000318"/>
    <property type="project" value="GO_Central"/>
</dbReference>
<dbReference type="GO" id="GO:0033615">
    <property type="term" value="P:mitochondrial proton-transporting ATP synthase complex assembly"/>
    <property type="evidence" value="ECO:0000318"/>
    <property type="project" value="GO_Central"/>
</dbReference>
<dbReference type="InterPro" id="IPR019165">
    <property type="entry name" value="Peptidase_M76_ATP23"/>
</dbReference>
<dbReference type="PANTHER" id="PTHR21711">
    <property type="entry name" value="MITOCHONDRIAL INNER MEMBRANE PROTEASE"/>
    <property type="match status" value="1"/>
</dbReference>
<dbReference type="PANTHER" id="PTHR21711:SF0">
    <property type="entry name" value="MITOCHONDRIAL INNER MEMBRANE PROTEASE ATP23 HOMOLOG"/>
    <property type="match status" value="1"/>
</dbReference>
<dbReference type="Pfam" id="PF09768">
    <property type="entry name" value="Peptidase_M76"/>
    <property type="match status" value="1"/>
</dbReference>
<dbReference type="PROSITE" id="PS00142">
    <property type="entry name" value="ZINC_PROTEASE"/>
    <property type="match status" value="1"/>
</dbReference>
<organism>
    <name type="scientific">Emericella nidulans (strain FGSC A4 / ATCC 38163 / CBS 112.46 / NRRL 194 / M139)</name>
    <name type="common">Aspergillus nidulans</name>
    <dbReference type="NCBI Taxonomy" id="227321"/>
    <lineage>
        <taxon>Eukaryota</taxon>
        <taxon>Fungi</taxon>
        <taxon>Dikarya</taxon>
        <taxon>Ascomycota</taxon>
        <taxon>Pezizomycotina</taxon>
        <taxon>Eurotiomycetes</taxon>
        <taxon>Eurotiomycetidae</taxon>
        <taxon>Eurotiales</taxon>
        <taxon>Aspergillaceae</taxon>
        <taxon>Aspergillus</taxon>
        <taxon>Aspergillus subgen. Nidulantes</taxon>
    </lineage>
</organism>
<name>ATP23_EMENI</name>
<protein>
    <recommendedName>
        <fullName>Mitochondrial inner membrane protease atp23</fullName>
        <ecNumber>3.4.24.-</ecNumber>
    </recommendedName>
</protein>
<keyword id="KW-0378">Hydrolase</keyword>
<keyword id="KW-0472">Membrane</keyword>
<keyword id="KW-0479">Metal-binding</keyword>
<keyword id="KW-0482">Metalloprotease</keyword>
<keyword id="KW-0496">Mitochondrion</keyword>
<keyword id="KW-0999">Mitochondrion inner membrane</keyword>
<keyword id="KW-0645">Protease</keyword>
<keyword id="KW-1185">Reference proteome</keyword>
<comment type="function">
    <text evidence="1">Has a dual role in the assembly of mitochondrial ATPase. Acts as a protease that removes N-terminal residues of mitochondrial ATPase CF(0) subunit 6 at the intermembrane space side. Also involved in the correct assembly of the membrane-embedded ATPase CF(0) particle, probably mediating association of subunit 6 with the subunit 9 ring (By similarity).</text>
</comment>
<comment type="subcellular location">
    <subcellularLocation>
        <location>Mitochondrion inner membrane</location>
        <topology>Peripheral membrane protein</topology>
        <orientation>Intermembrane side</orientation>
    </subcellularLocation>
    <text evidence="1">Associates loosely with the inner membrane.</text>
</comment>
<comment type="similarity">
    <text evidence="4">Belongs to the peptidase M76 family.</text>
</comment>
<sequence length="239" mass="28014">MPNSQTSNSQPQVSEKDVDTGFRKGDDTFTHWRNVFNILTGRMTDEGIEQFRVARDLRNEAADCKRCEDQRDYLLQWSPIIRYMSDSIRQLGGDLSSHNIYCRRCTNRKAGGFDPEYGILICANEMKDQGHLEDTMAHEMVHAYDHLRFKVDWTNNLRHAACTEIRASSLSGECRWAREFFRRGQWKLTQQHQECVRRRAVLSVMARPGCQDKGHAEKVVNEVWDSCFRDTRPFDEIFR</sequence>
<gene>
    <name type="primary">atp23</name>
    <name type="ORF">AN5816</name>
</gene>
<reference key="1">
    <citation type="journal article" date="2005" name="Nature">
        <title>Sequencing of Aspergillus nidulans and comparative analysis with A. fumigatus and A. oryzae.</title>
        <authorList>
            <person name="Galagan J.E."/>
            <person name="Calvo S.E."/>
            <person name="Cuomo C."/>
            <person name="Ma L.-J."/>
            <person name="Wortman J.R."/>
            <person name="Batzoglou S."/>
            <person name="Lee S.-I."/>
            <person name="Bastuerkmen M."/>
            <person name="Spevak C.C."/>
            <person name="Clutterbuck J."/>
            <person name="Kapitonov V."/>
            <person name="Jurka J."/>
            <person name="Scazzocchio C."/>
            <person name="Farman M.L."/>
            <person name="Butler J."/>
            <person name="Purcell S."/>
            <person name="Harris S."/>
            <person name="Braus G.H."/>
            <person name="Draht O."/>
            <person name="Busch S."/>
            <person name="D'Enfert C."/>
            <person name="Bouchier C."/>
            <person name="Goldman G.H."/>
            <person name="Bell-Pedersen D."/>
            <person name="Griffiths-Jones S."/>
            <person name="Doonan J.H."/>
            <person name="Yu J."/>
            <person name="Vienken K."/>
            <person name="Pain A."/>
            <person name="Freitag M."/>
            <person name="Selker E.U."/>
            <person name="Archer D.B."/>
            <person name="Penalva M.A."/>
            <person name="Oakley B.R."/>
            <person name="Momany M."/>
            <person name="Tanaka T."/>
            <person name="Kumagai T."/>
            <person name="Asai K."/>
            <person name="Machida M."/>
            <person name="Nierman W.C."/>
            <person name="Denning D.W."/>
            <person name="Caddick M.X."/>
            <person name="Hynes M."/>
            <person name="Paoletti M."/>
            <person name="Fischer R."/>
            <person name="Miller B.L."/>
            <person name="Dyer P.S."/>
            <person name="Sachs M.S."/>
            <person name="Osmani S.A."/>
            <person name="Birren B.W."/>
        </authorList>
    </citation>
    <scope>NUCLEOTIDE SEQUENCE [LARGE SCALE GENOMIC DNA]</scope>
    <source>
        <strain>FGSC A4 / ATCC 38163 / CBS 112.46 / NRRL 194 / M139</strain>
    </source>
</reference>
<reference key="2">
    <citation type="journal article" date="2009" name="Fungal Genet. Biol.">
        <title>The 2008 update of the Aspergillus nidulans genome annotation: a community effort.</title>
        <authorList>
            <person name="Wortman J.R."/>
            <person name="Gilsenan J.M."/>
            <person name="Joardar V."/>
            <person name="Deegan J."/>
            <person name="Clutterbuck J."/>
            <person name="Andersen M.R."/>
            <person name="Archer D."/>
            <person name="Bencina M."/>
            <person name="Braus G."/>
            <person name="Coutinho P."/>
            <person name="von Dohren H."/>
            <person name="Doonan J."/>
            <person name="Driessen A.J."/>
            <person name="Durek P."/>
            <person name="Espeso E."/>
            <person name="Fekete E."/>
            <person name="Flipphi M."/>
            <person name="Estrada C.G."/>
            <person name="Geysens S."/>
            <person name="Goldman G."/>
            <person name="de Groot P.W."/>
            <person name="Hansen K."/>
            <person name="Harris S.D."/>
            <person name="Heinekamp T."/>
            <person name="Helmstaedt K."/>
            <person name="Henrissat B."/>
            <person name="Hofmann G."/>
            <person name="Homan T."/>
            <person name="Horio T."/>
            <person name="Horiuchi H."/>
            <person name="James S."/>
            <person name="Jones M."/>
            <person name="Karaffa L."/>
            <person name="Karanyi Z."/>
            <person name="Kato M."/>
            <person name="Keller N."/>
            <person name="Kelly D.E."/>
            <person name="Kiel J.A."/>
            <person name="Kim J.M."/>
            <person name="van der Klei I.J."/>
            <person name="Klis F.M."/>
            <person name="Kovalchuk A."/>
            <person name="Krasevec N."/>
            <person name="Kubicek C.P."/>
            <person name="Liu B."/>
            <person name="Maccabe A."/>
            <person name="Meyer V."/>
            <person name="Mirabito P."/>
            <person name="Miskei M."/>
            <person name="Mos M."/>
            <person name="Mullins J."/>
            <person name="Nelson D.R."/>
            <person name="Nielsen J."/>
            <person name="Oakley B.R."/>
            <person name="Osmani S.A."/>
            <person name="Pakula T."/>
            <person name="Paszewski A."/>
            <person name="Paulsen I."/>
            <person name="Pilsyk S."/>
            <person name="Pocsi I."/>
            <person name="Punt P.J."/>
            <person name="Ram A.F."/>
            <person name="Ren Q."/>
            <person name="Robellet X."/>
            <person name="Robson G."/>
            <person name="Seiboth B."/>
            <person name="van Solingen P."/>
            <person name="Specht T."/>
            <person name="Sun J."/>
            <person name="Taheri-Talesh N."/>
            <person name="Takeshita N."/>
            <person name="Ussery D."/>
            <person name="vanKuyk P.A."/>
            <person name="Visser H."/>
            <person name="van de Vondervoort P.J."/>
            <person name="de Vries R.P."/>
            <person name="Walton J."/>
            <person name="Xiang X."/>
            <person name="Xiong Y."/>
            <person name="Zeng A.P."/>
            <person name="Brandt B.W."/>
            <person name="Cornell M.J."/>
            <person name="van den Hondel C.A."/>
            <person name="Visser J."/>
            <person name="Oliver S.G."/>
            <person name="Turner G."/>
        </authorList>
    </citation>
    <scope>GENOME REANNOTATION</scope>
    <source>
        <strain>FGSC A4 / ATCC 38163 / CBS 112.46 / NRRL 194 / M139</strain>
    </source>
</reference>
<evidence type="ECO:0000250" key="1"/>
<evidence type="ECO:0000255" key="2">
    <source>
        <dbReference type="PROSITE-ProRule" id="PRU10095"/>
    </source>
</evidence>
<evidence type="ECO:0000256" key="3">
    <source>
        <dbReference type="SAM" id="MobiDB-lite"/>
    </source>
</evidence>
<evidence type="ECO:0000305" key="4"/>
<accession>Q5B0W4</accession>
<accession>C8V087</accession>
<proteinExistence type="inferred from homology"/>
<feature type="chain" id="PRO_0000330063" description="Mitochondrial inner membrane protease atp23">
    <location>
        <begin position="1"/>
        <end position="239"/>
    </location>
</feature>
<feature type="region of interest" description="Disordered" evidence="3">
    <location>
        <begin position="1"/>
        <end position="22"/>
    </location>
</feature>
<feature type="compositionally biased region" description="Polar residues" evidence="3">
    <location>
        <begin position="1"/>
        <end position="13"/>
    </location>
</feature>
<feature type="active site" evidence="2">
    <location>
        <position position="139"/>
    </location>
</feature>
<feature type="binding site" evidence="1">
    <location>
        <position position="138"/>
    </location>
    <ligand>
        <name>a divalent metal cation</name>
        <dbReference type="ChEBI" id="CHEBI:60240"/>
        <note>catalytic</note>
    </ligand>
</feature>
<feature type="binding site" evidence="1">
    <location>
        <position position="142"/>
    </location>
    <ligand>
        <name>a divalent metal cation</name>
        <dbReference type="ChEBI" id="CHEBI:60240"/>
        <note>catalytic</note>
    </ligand>
</feature>